<comment type="function">
    <text evidence="1">Catalyzes the ATP-dependent phosphorylation of N-acetyl-L-glutamate.</text>
</comment>
<comment type="catalytic activity">
    <reaction evidence="1">
        <text>N-acetyl-L-glutamate + ATP = N-acetyl-L-glutamyl 5-phosphate + ADP</text>
        <dbReference type="Rhea" id="RHEA:14629"/>
        <dbReference type="ChEBI" id="CHEBI:30616"/>
        <dbReference type="ChEBI" id="CHEBI:44337"/>
        <dbReference type="ChEBI" id="CHEBI:57936"/>
        <dbReference type="ChEBI" id="CHEBI:456216"/>
        <dbReference type="EC" id="2.7.2.8"/>
    </reaction>
</comment>
<comment type="pathway">
    <text evidence="1">Amino-acid biosynthesis; L-arginine biosynthesis; N(2)-acetyl-L-ornithine from L-glutamate: step 2/4.</text>
</comment>
<comment type="subcellular location">
    <subcellularLocation>
        <location evidence="1">Cytoplasm</location>
    </subcellularLocation>
</comment>
<comment type="similarity">
    <text evidence="1">Belongs to the acetylglutamate kinase family. ArgB subfamily.</text>
</comment>
<gene>
    <name evidence="1" type="primary">argB</name>
    <name type="ordered locus">RC1_2288</name>
</gene>
<sequence>MSTPSPAAAPSREEWLAKARTLSEALPFMRRYAGRTVVVKYGGHAMGDESLGRRFANDIVLMKQMGISPVVVHGGGPQIGQMLERLKIKSEFVDGLRVTDKETVEIAEMVLSGSINKQIVALINDAGGDAVGLSGKDDDLIEARKVTRSKRDPDSNIEKVIDLGFVGDPFRVNPGLLHKLQQADIIPVIAPIGIGEDGQTYNINADTAAGAIAAAVNATRLLLLTDVAGVLDKQKRLIPEMSVEAAQRAIDDGTATGGMIPKIETCLRAVNGGVEAAVILDGRVPHAIVLELFTEGGAGTLIGRK</sequence>
<evidence type="ECO:0000255" key="1">
    <source>
        <dbReference type="HAMAP-Rule" id="MF_00082"/>
    </source>
</evidence>
<organism>
    <name type="scientific">Rhodospirillum centenum (strain ATCC 51521 / SW)</name>
    <dbReference type="NCBI Taxonomy" id="414684"/>
    <lineage>
        <taxon>Bacteria</taxon>
        <taxon>Pseudomonadati</taxon>
        <taxon>Pseudomonadota</taxon>
        <taxon>Alphaproteobacteria</taxon>
        <taxon>Rhodospirillales</taxon>
        <taxon>Rhodospirillaceae</taxon>
        <taxon>Rhodospirillum</taxon>
    </lineage>
</organism>
<protein>
    <recommendedName>
        <fullName evidence="1">Acetylglutamate kinase</fullName>
        <ecNumber evidence="1">2.7.2.8</ecNumber>
    </recommendedName>
    <alternativeName>
        <fullName evidence="1">N-acetyl-L-glutamate 5-phosphotransferase</fullName>
    </alternativeName>
    <alternativeName>
        <fullName evidence="1">NAG kinase</fullName>
        <shortName evidence="1">NAGK</shortName>
    </alternativeName>
</protein>
<dbReference type="EC" id="2.7.2.8" evidence="1"/>
<dbReference type="EMBL" id="CP000613">
    <property type="protein sequence ID" value="ACI99675.1"/>
    <property type="molecule type" value="Genomic_DNA"/>
</dbReference>
<dbReference type="RefSeq" id="WP_012567460.1">
    <property type="nucleotide sequence ID" value="NC_011420.2"/>
</dbReference>
<dbReference type="SMR" id="B6IPH3"/>
<dbReference type="STRING" id="414684.RC1_2288"/>
<dbReference type="KEGG" id="rce:RC1_2288"/>
<dbReference type="eggNOG" id="COG0548">
    <property type="taxonomic scope" value="Bacteria"/>
</dbReference>
<dbReference type="HOGENOM" id="CLU_053680_0_0_5"/>
<dbReference type="OrthoDB" id="9803155at2"/>
<dbReference type="UniPathway" id="UPA00068">
    <property type="reaction ID" value="UER00107"/>
</dbReference>
<dbReference type="Proteomes" id="UP000001591">
    <property type="component" value="Chromosome"/>
</dbReference>
<dbReference type="GO" id="GO:0005737">
    <property type="term" value="C:cytoplasm"/>
    <property type="evidence" value="ECO:0007669"/>
    <property type="project" value="UniProtKB-SubCell"/>
</dbReference>
<dbReference type="GO" id="GO:0003991">
    <property type="term" value="F:acetylglutamate kinase activity"/>
    <property type="evidence" value="ECO:0007669"/>
    <property type="project" value="UniProtKB-UniRule"/>
</dbReference>
<dbReference type="GO" id="GO:0005524">
    <property type="term" value="F:ATP binding"/>
    <property type="evidence" value="ECO:0007669"/>
    <property type="project" value="UniProtKB-UniRule"/>
</dbReference>
<dbReference type="GO" id="GO:0042450">
    <property type="term" value="P:arginine biosynthetic process via ornithine"/>
    <property type="evidence" value="ECO:0007669"/>
    <property type="project" value="UniProtKB-UniRule"/>
</dbReference>
<dbReference type="GO" id="GO:0006526">
    <property type="term" value="P:L-arginine biosynthetic process"/>
    <property type="evidence" value="ECO:0007669"/>
    <property type="project" value="UniProtKB-UniPathway"/>
</dbReference>
<dbReference type="CDD" id="cd04250">
    <property type="entry name" value="AAK_NAGK-C"/>
    <property type="match status" value="1"/>
</dbReference>
<dbReference type="FunFam" id="3.40.1160.10:FF:000004">
    <property type="entry name" value="Acetylglutamate kinase"/>
    <property type="match status" value="1"/>
</dbReference>
<dbReference type="Gene3D" id="3.40.1160.10">
    <property type="entry name" value="Acetylglutamate kinase-like"/>
    <property type="match status" value="1"/>
</dbReference>
<dbReference type="HAMAP" id="MF_00082">
    <property type="entry name" value="ArgB"/>
    <property type="match status" value="1"/>
</dbReference>
<dbReference type="InterPro" id="IPR036393">
    <property type="entry name" value="AceGlu_kinase-like_sf"/>
</dbReference>
<dbReference type="InterPro" id="IPR004662">
    <property type="entry name" value="AcgluKinase_fam"/>
</dbReference>
<dbReference type="InterPro" id="IPR037528">
    <property type="entry name" value="ArgB"/>
</dbReference>
<dbReference type="InterPro" id="IPR001048">
    <property type="entry name" value="Asp/Glu/Uridylate_kinase"/>
</dbReference>
<dbReference type="InterPro" id="IPR001057">
    <property type="entry name" value="Glu/AcGlu_kinase"/>
</dbReference>
<dbReference type="InterPro" id="IPR041727">
    <property type="entry name" value="NAGK-C"/>
</dbReference>
<dbReference type="NCBIfam" id="TIGR00761">
    <property type="entry name" value="argB"/>
    <property type="match status" value="1"/>
</dbReference>
<dbReference type="PANTHER" id="PTHR23342">
    <property type="entry name" value="N-ACETYLGLUTAMATE SYNTHASE"/>
    <property type="match status" value="1"/>
</dbReference>
<dbReference type="PANTHER" id="PTHR23342:SF0">
    <property type="entry name" value="N-ACETYLGLUTAMATE SYNTHASE, MITOCHONDRIAL"/>
    <property type="match status" value="1"/>
</dbReference>
<dbReference type="Pfam" id="PF00696">
    <property type="entry name" value="AA_kinase"/>
    <property type="match status" value="1"/>
</dbReference>
<dbReference type="PIRSF" id="PIRSF000728">
    <property type="entry name" value="NAGK"/>
    <property type="match status" value="1"/>
</dbReference>
<dbReference type="PRINTS" id="PR00474">
    <property type="entry name" value="GLU5KINASE"/>
</dbReference>
<dbReference type="SUPFAM" id="SSF53633">
    <property type="entry name" value="Carbamate kinase-like"/>
    <property type="match status" value="1"/>
</dbReference>
<name>ARGB_RHOCS</name>
<feature type="chain" id="PRO_1000092876" description="Acetylglutamate kinase">
    <location>
        <begin position="1"/>
        <end position="305"/>
    </location>
</feature>
<feature type="binding site" evidence="1">
    <location>
        <begin position="75"/>
        <end position="76"/>
    </location>
    <ligand>
        <name>substrate</name>
    </ligand>
</feature>
<feature type="binding site" evidence="1">
    <location>
        <position position="97"/>
    </location>
    <ligand>
        <name>substrate</name>
    </ligand>
</feature>
<feature type="binding site" evidence="1">
    <location>
        <position position="202"/>
    </location>
    <ligand>
        <name>substrate</name>
    </ligand>
</feature>
<feature type="site" description="Transition state stabilizer" evidence="1">
    <location>
        <position position="40"/>
    </location>
</feature>
<feature type="site" description="Transition state stabilizer" evidence="1">
    <location>
        <position position="262"/>
    </location>
</feature>
<keyword id="KW-0028">Amino-acid biosynthesis</keyword>
<keyword id="KW-0055">Arginine biosynthesis</keyword>
<keyword id="KW-0067">ATP-binding</keyword>
<keyword id="KW-0963">Cytoplasm</keyword>
<keyword id="KW-0418">Kinase</keyword>
<keyword id="KW-0547">Nucleotide-binding</keyword>
<keyword id="KW-1185">Reference proteome</keyword>
<keyword id="KW-0808">Transferase</keyword>
<accession>B6IPH3</accession>
<reference key="1">
    <citation type="submission" date="2007-03" db="EMBL/GenBank/DDBJ databases">
        <title>Genome sequence of Rhodospirillum centenum.</title>
        <authorList>
            <person name="Touchman J.W."/>
            <person name="Bauer C."/>
            <person name="Blankenship R.E."/>
        </authorList>
    </citation>
    <scope>NUCLEOTIDE SEQUENCE [LARGE SCALE GENOMIC DNA]</scope>
    <source>
        <strain>ATCC 51521 / SW</strain>
    </source>
</reference>
<proteinExistence type="inferred from homology"/>